<comment type="function">
    <text evidence="3 5 6 7">V region of the variable domain of T cell receptor (TR) alpha chain that participates in the antigen recognition (PubMed:24600447). Alpha-beta T cell receptors are antigen specific receptors which are essential to the immune response and are present on the cell surface of T lymphocytes. Recognize peptide-major histocompatibility (MH) (pMH) complexes that are displayed by antigen presenting cells (APC), a prerequisite for efficient T cell adaptive immunity against pathogens (PubMed:25493333). Binding of alpha-beta TR to pMH complex initiates TR-CD3 clustering on the cell surface and intracellular activation of LCK that phosphorylates the ITAM motifs of CD3G, CD3D, CD3E and CD247 enabling the recruitment of ZAP70. In turn ZAP70 phosphorylates LAT, which recruits numerous signaling molecules to form the LAT signalosome. The LAT signalosome propagates signal branching to three major signaling pathways, the calcium, the mitogen-activated protein kinase (MAPK) kinase and the nuclear factor NF-kappa-B (NF-kB) pathways, leading to the mobilization of transcription factors that are critical for gene expression and essential for T cell growth and differentiation (PubMed:23524462). The T cell repertoire is generated in the thymus, by V-(D)-J rearrangement. This repertoire is then shaped by intrathymic selection events to generate a peripheral T cell pool of self-MH restricted, non-autoaggressive T cells. Post-thymic interaction of alpha-beta TR with the pMH complexes shapes TR structural and functional avidity (PubMed:15040585).</text>
</comment>
<comment type="subunit">
    <text evidence="4">Alpha-beta TR is a heterodimer composed of an alpha and beta chain; disulfide-linked. The alpha-beta TR is associated with the transmembrane signaling CD3 coreceptor proteins to form the TR-CD3 (TcR or TCR). The assembly of alpha-beta TR heterodimers with CD3 occurs in the endoplasmic reticulum where a single alpha-beta TR heterodimer associates with one CD3D-CD3E heterodimer, one CD3G-CD3E heterodimer and one CD247 homodimer forming a stable octameric structure. CD3D-CD3E and CD3G-CD3E heterodimers preferentially associate with TR alpha and TR beta chains, respectively. The association of the CD247 homodimer is the last step of TcR assembly in the endoplasmic reticulum and is required for transport to the cell surface.</text>
</comment>
<comment type="subcellular location">
    <subcellularLocation>
        <location evidence="4">Cell membrane</location>
    </subcellularLocation>
</comment>
<comment type="polymorphism">
    <text evidence="9">There are several alleles. The sequence shown is that of IMGT allele TRAV8-3*01.</text>
</comment>
<accession>A0A0A6YYJ7</accession>
<keyword id="KW-1064">Adaptive immunity</keyword>
<keyword id="KW-1003">Cell membrane</keyword>
<keyword id="KW-1015">Disulfide bond</keyword>
<keyword id="KW-0325">Glycoprotein</keyword>
<keyword id="KW-0391">Immunity</keyword>
<keyword id="KW-0393">Immunoglobulin domain</keyword>
<keyword id="KW-0472">Membrane</keyword>
<keyword id="KW-0675">Receptor</keyword>
<keyword id="KW-1185">Reference proteome</keyword>
<keyword id="KW-0732">Signal</keyword>
<keyword id="KW-1279">T cell receptor</keyword>
<gene>
    <name evidence="8" type="primary">TRAV8-3</name>
</gene>
<dbReference type="EMBL" id="AC243980">
    <property type="status" value="NOT_ANNOTATED_CDS"/>
    <property type="molecule type" value="Genomic_DNA"/>
</dbReference>
<dbReference type="SMR" id="A0A0A6YYJ7"/>
<dbReference type="FunCoup" id="A0A0A6YYJ7">
    <property type="interactions" value="335"/>
</dbReference>
<dbReference type="IMGT_GENE-DB" id="TRAV8-3"/>
<dbReference type="GlyCosmos" id="A0A0A6YYJ7">
    <property type="glycosylation" value="1 site, No reported glycans"/>
</dbReference>
<dbReference type="GlyGen" id="A0A0A6YYJ7">
    <property type="glycosylation" value="1 site"/>
</dbReference>
<dbReference type="BioMuta" id="TRAV8-3"/>
<dbReference type="MassIVE" id="A0A0A6YYJ7"/>
<dbReference type="Ensembl" id="ENST00000390435.1">
    <property type="protein sequence ID" value="ENSP00000440087.1"/>
    <property type="gene ID" value="ENSG00000211787.1"/>
</dbReference>
<dbReference type="AGR" id="HGNC:12148"/>
<dbReference type="GeneCards" id="TRAV8-3"/>
<dbReference type="HGNC" id="HGNC:12148">
    <property type="gene designation" value="TRAV8-3"/>
</dbReference>
<dbReference type="HPA" id="ENSG00000211787">
    <property type="expression patterns" value="Tissue enriched (lymphoid)"/>
</dbReference>
<dbReference type="neXtProt" id="NX_A0A0A6YYJ7"/>
<dbReference type="OpenTargets" id="ENSG00000211787"/>
<dbReference type="VEuPathDB" id="HostDB:ENSG00000211787"/>
<dbReference type="GeneTree" id="ENSGT00940000153073"/>
<dbReference type="HOGENOM" id="CLU_077975_8_0_1"/>
<dbReference type="InParanoid" id="A0A0A6YYJ7"/>
<dbReference type="OMA" id="WRDSAGY"/>
<dbReference type="OrthoDB" id="8947657at2759"/>
<dbReference type="PAN-GO" id="A0A0A6YYJ7">
    <property type="GO annotations" value="0 GO annotations based on evolutionary models"/>
</dbReference>
<dbReference type="SignaLink" id="A0A0A6YYJ7"/>
<dbReference type="ChiTaRS" id="TRAV8-3">
    <property type="organism name" value="human"/>
</dbReference>
<dbReference type="Pharos" id="A0A0A6YYJ7">
    <property type="development level" value="Tdark"/>
</dbReference>
<dbReference type="PRO" id="PR:A0A0A6YYJ7"/>
<dbReference type="Proteomes" id="UP000005640">
    <property type="component" value="Chromosome 14"/>
</dbReference>
<dbReference type="RNAct" id="A0A0A6YYJ7">
    <property type="molecule type" value="protein"/>
</dbReference>
<dbReference type="Bgee" id="ENSG00000211787">
    <property type="expression patterns" value="Expressed in granulocyte and 109 other cell types or tissues"/>
</dbReference>
<dbReference type="GO" id="GO:0042101">
    <property type="term" value="C:T cell receptor complex"/>
    <property type="evidence" value="ECO:0007669"/>
    <property type="project" value="UniProtKB-KW"/>
</dbReference>
<dbReference type="GO" id="GO:0002250">
    <property type="term" value="P:adaptive immune response"/>
    <property type="evidence" value="ECO:0007669"/>
    <property type="project" value="UniProtKB-KW"/>
</dbReference>
<dbReference type="Gene3D" id="2.60.40.10">
    <property type="entry name" value="Immunoglobulins"/>
    <property type="match status" value="1"/>
</dbReference>
<dbReference type="InterPro" id="IPR007110">
    <property type="entry name" value="Ig-like_dom"/>
</dbReference>
<dbReference type="InterPro" id="IPR036179">
    <property type="entry name" value="Ig-like_dom_sf"/>
</dbReference>
<dbReference type="InterPro" id="IPR013783">
    <property type="entry name" value="Ig-like_fold"/>
</dbReference>
<dbReference type="InterPro" id="IPR013106">
    <property type="entry name" value="Ig_V-set"/>
</dbReference>
<dbReference type="InterPro" id="IPR051287">
    <property type="entry name" value="TCR_variable_region"/>
</dbReference>
<dbReference type="PANTHER" id="PTHR19367:SF5">
    <property type="entry name" value="T CELL RECEPTOR ALPHA VARIABLE 8-3"/>
    <property type="match status" value="1"/>
</dbReference>
<dbReference type="PANTHER" id="PTHR19367">
    <property type="entry name" value="T-CELL RECEPTOR ALPHA CHAIN V REGION"/>
    <property type="match status" value="1"/>
</dbReference>
<dbReference type="Pfam" id="PF07686">
    <property type="entry name" value="V-set"/>
    <property type="match status" value="1"/>
</dbReference>
<dbReference type="SMART" id="SM00406">
    <property type="entry name" value="IGv"/>
    <property type="match status" value="1"/>
</dbReference>
<dbReference type="SUPFAM" id="SSF48726">
    <property type="entry name" value="Immunoglobulin"/>
    <property type="match status" value="1"/>
</dbReference>
<dbReference type="PROSITE" id="PS50835">
    <property type="entry name" value="IG_LIKE"/>
    <property type="match status" value="1"/>
</dbReference>
<reference key="1">
    <citation type="journal article" date="2003" name="Nature">
        <title>The DNA sequence and analysis of human chromosome 14.</title>
        <authorList>
            <person name="Heilig R."/>
            <person name="Eckenberg R."/>
            <person name="Petit J.-L."/>
            <person name="Fonknechten N."/>
            <person name="Da Silva C."/>
            <person name="Cattolico L."/>
            <person name="Levy M."/>
            <person name="Barbe V."/>
            <person name="De Berardinis V."/>
            <person name="Ureta-Vidal A."/>
            <person name="Pelletier E."/>
            <person name="Vico V."/>
            <person name="Anthouard V."/>
            <person name="Rowen L."/>
            <person name="Madan A."/>
            <person name="Qin S."/>
            <person name="Sun H."/>
            <person name="Du H."/>
            <person name="Pepin K."/>
            <person name="Artiguenave F."/>
            <person name="Robert C."/>
            <person name="Cruaud C."/>
            <person name="Bruels T."/>
            <person name="Jaillon O."/>
            <person name="Friedlander L."/>
            <person name="Samson G."/>
            <person name="Brottier P."/>
            <person name="Cure S."/>
            <person name="Segurens B."/>
            <person name="Aniere F."/>
            <person name="Samain S."/>
            <person name="Crespeau H."/>
            <person name="Abbasi N."/>
            <person name="Aiach N."/>
            <person name="Boscus D."/>
            <person name="Dickhoff R."/>
            <person name="Dors M."/>
            <person name="Dubois I."/>
            <person name="Friedman C."/>
            <person name="Gouyvenoux M."/>
            <person name="James R."/>
            <person name="Madan A."/>
            <person name="Mairey-Estrada B."/>
            <person name="Mangenot S."/>
            <person name="Martins N."/>
            <person name="Menard M."/>
            <person name="Oztas S."/>
            <person name="Ratcliffe A."/>
            <person name="Shaffer T."/>
            <person name="Trask B."/>
            <person name="Vacherie B."/>
            <person name="Bellemere C."/>
            <person name="Belser C."/>
            <person name="Besnard-Gonnet M."/>
            <person name="Bartol-Mavel D."/>
            <person name="Boutard M."/>
            <person name="Briez-Silla S."/>
            <person name="Combette S."/>
            <person name="Dufosse-Laurent V."/>
            <person name="Ferron C."/>
            <person name="Lechaplais C."/>
            <person name="Louesse C."/>
            <person name="Muselet D."/>
            <person name="Magdelenat G."/>
            <person name="Pateau E."/>
            <person name="Petit E."/>
            <person name="Sirvain-Trukniewicz P."/>
            <person name="Trybou A."/>
            <person name="Vega-Czarny N."/>
            <person name="Bataille E."/>
            <person name="Bluet E."/>
            <person name="Bordelais I."/>
            <person name="Dubois M."/>
            <person name="Dumont C."/>
            <person name="Guerin T."/>
            <person name="Haffray S."/>
            <person name="Hammadi R."/>
            <person name="Muanga J."/>
            <person name="Pellouin V."/>
            <person name="Robert D."/>
            <person name="Wunderle E."/>
            <person name="Gauguet G."/>
            <person name="Roy A."/>
            <person name="Sainte-Marthe L."/>
            <person name="Verdier J."/>
            <person name="Verdier-Discala C."/>
            <person name="Hillier L.W."/>
            <person name="Fulton L."/>
            <person name="McPherson J."/>
            <person name="Matsuda F."/>
            <person name="Wilson R."/>
            <person name="Scarpelli C."/>
            <person name="Gyapay G."/>
            <person name="Wincker P."/>
            <person name="Saurin W."/>
            <person name="Quetier F."/>
            <person name="Waterston R."/>
            <person name="Hood L."/>
            <person name="Weissenbach J."/>
        </authorList>
    </citation>
    <scope>NUCLEOTIDE SEQUENCE [LARGE SCALE GENOMIC DNA] (IMGT ALLELE TRAV8-3*01)</scope>
</reference>
<reference key="2">
    <citation type="book" date="2001" name="The T Cell Receptor FactsBook.">
        <title>The T Cell Receptor FactsBook.</title>
        <editorList>
            <person name="Lefranc M.P."/>
            <person name="Lefranc G."/>
        </editorList>
        <authorList>
            <person name="Lefranc M.P."/>
            <person name="Lefranc G."/>
        </authorList>
    </citation>
    <scope>NOMENCLATURE</scope>
</reference>
<reference key="3">
    <citation type="journal article" date="2004" name="Nat. Rev. Immunol.">
        <title>The many important facets of T-cell repertoire diversity.</title>
        <authorList>
            <person name="Nikolich-Zugich J."/>
            <person name="Slifka M.K."/>
            <person name="Messaoudi I."/>
        </authorList>
    </citation>
    <scope>REVIEW ON T CELL REPERTOIRE DIVERSITY</scope>
</reference>
<reference key="4">
    <citation type="journal article" date="2010" name="Cold Spring Harb. Perspect. Biol.">
        <title>Structural biology of the T-cell receptor: insights into receptor assembly, ligand recognition, and initiation of signaling.</title>
        <authorList>
            <person name="Wucherpfennig K.W."/>
            <person name="Gagnon E."/>
            <person name="Call M.J."/>
            <person name="Huseby E.S."/>
            <person name="Call M.E."/>
        </authorList>
    </citation>
    <scope>REVIEW ON T CELL RECEPTOR-CD3 COMPLEX ASSEMBLY</scope>
    <scope>SUBCELLULAR LOCATION</scope>
</reference>
<reference key="5">
    <citation type="journal article" date="2013" name="Nat. Rev. Immunol.">
        <title>T cell receptor signalling networks: branched, diversified and bounded.</title>
        <authorList>
            <person name="Brownlie R.J."/>
            <person name="Zamoyska R."/>
        </authorList>
    </citation>
    <scope>REVIEW ON T CELL RECEPTOR SIGNALING</scope>
</reference>
<reference key="6">
    <citation type="journal article" date="2014" name="Front. Immunol.">
        <title>Immunoglobulin and T Cell Receptor Genes: IMGT((R)) and the Birth and Rise of Immunoinformatics.</title>
        <authorList>
            <person name="Lefranc M.P."/>
        </authorList>
    </citation>
    <scope>NOMENCLATURE</scope>
</reference>
<reference key="7">
    <citation type="journal article" date="2015" name="Annu. Rev. Immunol.">
        <title>T cell antigen receptor recognition of antigen-presenting molecules.</title>
        <authorList>
            <person name="Rossjohn J."/>
            <person name="Gras S."/>
            <person name="Miles J.J."/>
            <person name="Turner S.J."/>
            <person name="Godfrey D.I."/>
            <person name="McCluskey J."/>
        </authorList>
    </citation>
    <scope>REVIEW ON FUNCTION</scope>
</reference>
<organism>
    <name type="scientific">Homo sapiens</name>
    <name type="common">Human</name>
    <dbReference type="NCBI Taxonomy" id="9606"/>
    <lineage>
        <taxon>Eukaryota</taxon>
        <taxon>Metazoa</taxon>
        <taxon>Chordata</taxon>
        <taxon>Craniata</taxon>
        <taxon>Vertebrata</taxon>
        <taxon>Euteleostomi</taxon>
        <taxon>Mammalia</taxon>
        <taxon>Eutheria</taxon>
        <taxon>Euarchontoglires</taxon>
        <taxon>Primates</taxon>
        <taxon>Haplorrhini</taxon>
        <taxon>Catarrhini</taxon>
        <taxon>Hominidae</taxon>
        <taxon>Homo</taxon>
    </lineage>
</organism>
<feature type="signal peptide" evidence="1">
    <location>
        <begin position="1"/>
        <end position="20"/>
    </location>
</feature>
<feature type="chain" id="PRO_0000443259" description="T cell receptor alpha variable 8-3" evidence="1">
    <location>
        <begin position="21"/>
        <end position="113"/>
    </location>
</feature>
<feature type="domain" description="Ig-like" evidence="2">
    <location>
        <begin position="21"/>
        <end position="113" status="greater than"/>
    </location>
</feature>
<feature type="glycosylation site" description="N-linked (GlcNAc...) asparagine" evidence="1">
    <location>
        <position position="43"/>
    </location>
</feature>
<feature type="disulfide bond" evidence="2">
    <location>
        <begin position="42"/>
        <end position="110"/>
    </location>
</feature>
<feature type="non-terminal residue">
    <location>
        <position position="113"/>
    </location>
</feature>
<proteinExistence type="inferred from homology"/>
<protein>
    <recommendedName>
        <fullName evidence="8">T cell receptor alpha variable 8-3</fullName>
    </recommendedName>
</protein>
<evidence type="ECO:0000255" key="1"/>
<evidence type="ECO:0000255" key="2">
    <source>
        <dbReference type="PROSITE-ProRule" id="PRU00114"/>
    </source>
</evidence>
<evidence type="ECO:0000303" key="3">
    <source>
    </source>
</evidence>
<evidence type="ECO:0000303" key="4">
    <source>
    </source>
</evidence>
<evidence type="ECO:0000303" key="5">
    <source>
    </source>
</evidence>
<evidence type="ECO:0000303" key="6">
    <source>
    </source>
</evidence>
<evidence type="ECO:0000303" key="7">
    <source>
    </source>
</evidence>
<evidence type="ECO:0000303" key="8">
    <source ref="2"/>
</evidence>
<evidence type="ECO:0000305" key="9"/>
<name>TVA83_HUMAN</name>
<sequence length="113" mass="12676">MLLELIPLLGIHFVLRTARAQSVTQPDIHITVSEGASLELRCNYSYGATPYLFWYVQSPGQGLQLLLKYFSGDTLVQGIKGFEAEFKRSQSSFNLRKPSVHWSDAAEYFCAVG</sequence>